<accession>A0A8J9S3B0</accession>
<reference key="1">
    <citation type="journal article" date="2021" name="Angew. Chem. Int. Ed.">
        <title>Biosynthetic studies of phomopsins unveil posttranslational installation of dehydroamino acids by ustYa family proteins.</title>
        <authorList>
            <person name="Sogahata K."/>
            <person name="Ozaki T."/>
            <person name="Igarashi Y."/>
            <person name="Naganuma Y."/>
            <person name="Liu C."/>
            <person name="Minami A."/>
            <person name="Oikawa H."/>
        </authorList>
    </citation>
    <scope>NUCLEOTIDE SEQUENCE [GENOMIC DNA]</scope>
    <scope>FUNCTION</scope>
    <source>
        <strain>ATCC 26115 / IMI 115107 / C 1557</strain>
    </source>
</reference>
<name>PHOF1_DIALO</name>
<sequence length="293" mass="30922">MSSSITPSLIAADLFSVDGLVAVVTGGATGIGLMIVKALEENGAKVYIIGRRKEVLDKVAKEEAKHGNIIPLQGDASSKPDLERIVAHITKETGYINLLVANAGISGPDPVRITPSTTLSELQRDLWSLDPSIFAQTFSVNVGTAYFSIAAFLPLLDAGNHKGNVVQSSQAIITSSIGAFGRVPLAHYAYSASKAAVTHMTKQFATALTKYKIRFNILAPGLYPSEMTAGIVKSFEQLSPEERATRVSPLGREGNTEDMAGCILWLASKAGAWLSGNVVVSDGGKLSVTPSSY</sequence>
<keyword id="KW-0521">NADP</keyword>
<keyword id="KW-0560">Oxidoreductase</keyword>
<keyword id="KW-0843">Virulence</keyword>
<comment type="function">
    <text evidence="4 7">Short-chain dehydrogenase/reductase; part of the gene cluster that mediates the biosynthesis of the phomopsins, a group of hexapeptide mycotoxins which infects lupins and causes lupinosis disease in livestock (PubMed:34608734). The role of phomF within the phomopsins biosynthesis pathway has still to be determined (Probable). The pathway starts with the processing of the precursor phomA by several endopeptidases including kexin proteases as well as the cluster-specific S41 family peptidase phomP1 and the oligopeptidase phomG to produce 10 identical copies of the hexapeptide Tyr-Val-Ile-Pro-Ile-Asp. After being excised from the precursor peptide, the core peptides are cyclized and modified post-translationally by enzymes encoded within the gene cluster. The timing and order of proteolysis of the phomA precursor and PTMs are still unknown. Two tyrosinase-like enzymes, phomQ1 and phomQ2, catalyze the chlorination and hydroxylation of Tyr, respectively. PhomYb, is proposed to be involved in the construction of the macrocyclic structure. The other 4 ustYa family proteins may be involved in PTMs that generate the unique structure of phomopsin A. PhomYa is required for the hydroxylation of C-beta of Tyr. PhomYc, phomYd, and phomYe are responsible for the biosynthesis of 2,3-dehydroisoleucine (dIle), 2,3-dehydroaspartic acid (dAsp), and 3,4-dehydroproline (dPro), respectively. While dIle formation by phomYc is indispensable for the installation of dAsp by phomYd, the order of the other PTMs have not been elucidated yet. Most of the biosynthetic enzymes likely have broad substrate specificity, and thus, there might be a metabolic grid from a precursor to phomopsin A. The enzyme(s) responsible for the biosynthesis of 3,4-dehydrovaline (dVal) have also not been identified yet. Finally, phomM acts as an S-adenosylmethionine-dependent alpha-N-methyltransferase that catalyzes two successive N-methylation reactions, converting N-desmethyl-phomopsin A to phomopsin A and phomopsin A further to an N,N-dimethylated congener called phomopsin E (Probable).</text>
</comment>
<comment type="similarity">
    <text evidence="6">Belongs to the short-chain dehydrogenases/reductases (SDR) family.</text>
</comment>
<feature type="chain" id="PRO_0000458394" description="Short-chain dehydrogenase/reductase PhomF">
    <location>
        <begin position="1"/>
        <end position="293"/>
    </location>
</feature>
<feature type="active site" description="Proton donor" evidence="2">
    <location>
        <position position="175"/>
    </location>
</feature>
<feature type="active site" description="Proton acceptor" evidence="3">
    <location>
        <position position="190"/>
    </location>
</feature>
<feature type="active site" description="Lowers pKa of active site Tyr" evidence="2">
    <location>
        <position position="194"/>
    </location>
</feature>
<feature type="binding site" evidence="1">
    <location>
        <position position="31"/>
    </location>
    <ligand>
        <name>NADP(+)</name>
        <dbReference type="ChEBI" id="CHEBI:58349"/>
    </ligand>
</feature>
<feature type="binding site" evidence="2">
    <location>
        <position position="102"/>
    </location>
    <ligand>
        <name>NADP(+)</name>
        <dbReference type="ChEBI" id="CHEBI:58349"/>
    </ligand>
</feature>
<feature type="binding site" evidence="2">
    <location>
        <position position="190"/>
    </location>
    <ligand>
        <name>NADP(+)</name>
        <dbReference type="ChEBI" id="CHEBI:58349"/>
    </ligand>
</feature>
<feature type="binding site" evidence="2">
    <location>
        <position position="194"/>
    </location>
    <ligand>
        <name>NADP(+)</name>
        <dbReference type="ChEBI" id="CHEBI:58349"/>
    </ligand>
</feature>
<feature type="binding site" evidence="1">
    <location>
        <position position="225"/>
    </location>
    <ligand>
        <name>NADP(+)</name>
        <dbReference type="ChEBI" id="CHEBI:58349"/>
    </ligand>
</feature>
<organism>
    <name type="scientific">Diaporthe leptostromiformis</name>
    <name type="common">Lupinosis disease fungus</name>
    <name type="synonym">Phomopsis leptostromiformis</name>
    <dbReference type="NCBI Taxonomy" id="291059"/>
    <lineage>
        <taxon>Eukaryota</taxon>
        <taxon>Fungi</taxon>
        <taxon>Dikarya</taxon>
        <taxon>Ascomycota</taxon>
        <taxon>Pezizomycotina</taxon>
        <taxon>Sordariomycetes</taxon>
        <taxon>Sordariomycetidae</taxon>
        <taxon>Diaporthales</taxon>
        <taxon>Diaporthaceae</taxon>
        <taxon>Diaporthe</taxon>
    </lineage>
</organism>
<gene>
    <name evidence="5" type="primary">phomF</name>
</gene>
<evidence type="ECO:0000250" key="1">
    <source>
        <dbReference type="UniProtKB" id="L0E2Z4"/>
    </source>
</evidence>
<evidence type="ECO:0000250" key="2">
    <source>
        <dbReference type="UniProtKB" id="O93868"/>
    </source>
</evidence>
<evidence type="ECO:0000255" key="3">
    <source>
        <dbReference type="PROSITE-ProRule" id="PRU10001"/>
    </source>
</evidence>
<evidence type="ECO:0000269" key="4">
    <source>
    </source>
</evidence>
<evidence type="ECO:0000303" key="5">
    <source>
    </source>
</evidence>
<evidence type="ECO:0000305" key="6"/>
<evidence type="ECO:0000305" key="7">
    <source>
    </source>
</evidence>
<dbReference type="EC" id="1.-.-.-" evidence="7"/>
<dbReference type="EMBL" id="LC646903">
    <property type="protein sequence ID" value="BDA39138.1"/>
    <property type="molecule type" value="Genomic_DNA"/>
</dbReference>
<dbReference type="SMR" id="A0A8J9S3B0"/>
<dbReference type="GO" id="GO:0016491">
    <property type="term" value="F:oxidoreductase activity"/>
    <property type="evidence" value="ECO:0007669"/>
    <property type="project" value="UniProtKB-KW"/>
</dbReference>
<dbReference type="CDD" id="cd05233">
    <property type="entry name" value="SDR_c"/>
    <property type="match status" value="1"/>
</dbReference>
<dbReference type="Gene3D" id="3.40.50.720">
    <property type="entry name" value="NAD(P)-binding Rossmann-like Domain"/>
    <property type="match status" value="1"/>
</dbReference>
<dbReference type="InterPro" id="IPR036291">
    <property type="entry name" value="NAD(P)-bd_dom_sf"/>
</dbReference>
<dbReference type="InterPro" id="IPR020904">
    <property type="entry name" value="Sc_DH/Rdtase_CS"/>
</dbReference>
<dbReference type="InterPro" id="IPR002347">
    <property type="entry name" value="SDR_fam"/>
</dbReference>
<dbReference type="InterPro" id="IPR052178">
    <property type="entry name" value="Sec_Metab_Biosynth_SDR"/>
</dbReference>
<dbReference type="PANTHER" id="PTHR43618">
    <property type="entry name" value="7-ALPHA-HYDROXYSTEROID DEHYDROGENASE"/>
    <property type="match status" value="1"/>
</dbReference>
<dbReference type="PANTHER" id="PTHR43618:SF18">
    <property type="entry name" value="SHORT CHAIN DEHYDROGENASE_REDUCTASE FAMILY (AFU_ORTHOLOGUE AFUA_5G12480)"/>
    <property type="match status" value="1"/>
</dbReference>
<dbReference type="Pfam" id="PF13561">
    <property type="entry name" value="adh_short_C2"/>
    <property type="match status" value="1"/>
</dbReference>
<dbReference type="PRINTS" id="PR00081">
    <property type="entry name" value="GDHRDH"/>
</dbReference>
<dbReference type="PRINTS" id="PR00080">
    <property type="entry name" value="SDRFAMILY"/>
</dbReference>
<dbReference type="SUPFAM" id="SSF51735">
    <property type="entry name" value="NAD(P)-binding Rossmann-fold domains"/>
    <property type="match status" value="1"/>
</dbReference>
<dbReference type="PROSITE" id="PS00061">
    <property type="entry name" value="ADH_SHORT"/>
    <property type="match status" value="1"/>
</dbReference>
<proteinExistence type="inferred from homology"/>
<protein>
    <recommendedName>
        <fullName evidence="5">Short-chain dehydrogenase/reductase PhomF</fullName>
        <ecNumber evidence="7">1.-.-.-</ecNumber>
    </recommendedName>
    <alternativeName>
        <fullName evidence="5">Phomopsin biosynthesis cluster protein F</fullName>
    </alternativeName>
</protein>